<dbReference type="EC" id="5.1.3.29" evidence="1"/>
<dbReference type="EMBL" id="BC120455">
    <property type="protein sequence ID" value="AAI20456.1"/>
    <property type="molecule type" value="mRNA"/>
</dbReference>
<dbReference type="RefSeq" id="NP_001069746.1">
    <property type="nucleotide sequence ID" value="NM_001076278.1"/>
</dbReference>
<dbReference type="SMR" id="Q0P563"/>
<dbReference type="FunCoup" id="Q0P563">
    <property type="interactions" value="15"/>
</dbReference>
<dbReference type="STRING" id="9913.ENSBTAP00000007505"/>
<dbReference type="PaxDb" id="9913-ENSBTAP00000007505"/>
<dbReference type="GeneID" id="613571"/>
<dbReference type="KEGG" id="bta:613571"/>
<dbReference type="CTD" id="282969"/>
<dbReference type="eggNOG" id="ENOG502RZR7">
    <property type="taxonomic scope" value="Eukaryota"/>
</dbReference>
<dbReference type="InParanoid" id="Q0P563"/>
<dbReference type="OrthoDB" id="10011710at2759"/>
<dbReference type="UniPathway" id="UPA00956"/>
<dbReference type="Proteomes" id="UP000009136">
    <property type="component" value="Unplaced"/>
</dbReference>
<dbReference type="GO" id="GO:0042806">
    <property type="term" value="F:fucose binding"/>
    <property type="evidence" value="ECO:0000250"/>
    <property type="project" value="UniProtKB"/>
</dbReference>
<dbReference type="GO" id="GO:0036373">
    <property type="term" value="F:L-fucose mutarotase activity"/>
    <property type="evidence" value="ECO:0000250"/>
    <property type="project" value="UniProtKB"/>
</dbReference>
<dbReference type="GO" id="GO:0016857">
    <property type="term" value="F:racemase and epimerase activity, acting on carbohydrates and derivatives"/>
    <property type="evidence" value="ECO:0000250"/>
    <property type="project" value="UniProtKB"/>
</dbReference>
<dbReference type="GO" id="GO:0006004">
    <property type="term" value="P:fucose metabolic process"/>
    <property type="evidence" value="ECO:0000250"/>
    <property type="project" value="UniProtKB"/>
</dbReference>
<dbReference type="GO" id="GO:0036065">
    <property type="term" value="P:fucosylation"/>
    <property type="evidence" value="ECO:0000318"/>
    <property type="project" value="GO_Central"/>
</dbReference>
<dbReference type="FunFam" id="3.40.1650.10:FF:000005">
    <property type="entry name" value="Fucose mutarotase"/>
    <property type="match status" value="1"/>
</dbReference>
<dbReference type="Gene3D" id="3.40.1650.10">
    <property type="entry name" value="RbsD-like domain"/>
    <property type="match status" value="1"/>
</dbReference>
<dbReference type="InterPro" id="IPR023750">
    <property type="entry name" value="RbsD-like_sf"/>
</dbReference>
<dbReference type="InterPro" id="IPR050443">
    <property type="entry name" value="RbsD/FucU_mutarotase"/>
</dbReference>
<dbReference type="InterPro" id="IPR007721">
    <property type="entry name" value="RbsD_FucU"/>
</dbReference>
<dbReference type="PANTHER" id="PTHR31690">
    <property type="entry name" value="FUCOSE MUTAROTASE"/>
    <property type="match status" value="1"/>
</dbReference>
<dbReference type="PANTHER" id="PTHR31690:SF4">
    <property type="entry name" value="FUCOSE MUTAROTASE"/>
    <property type="match status" value="1"/>
</dbReference>
<dbReference type="Pfam" id="PF05025">
    <property type="entry name" value="RbsD_FucU"/>
    <property type="match status" value="1"/>
</dbReference>
<dbReference type="SUPFAM" id="SSF102546">
    <property type="entry name" value="RbsD-like"/>
    <property type="match status" value="1"/>
</dbReference>
<organism>
    <name type="scientific">Bos taurus</name>
    <name type="common">Bovine</name>
    <dbReference type="NCBI Taxonomy" id="9913"/>
    <lineage>
        <taxon>Eukaryota</taxon>
        <taxon>Metazoa</taxon>
        <taxon>Chordata</taxon>
        <taxon>Craniata</taxon>
        <taxon>Vertebrata</taxon>
        <taxon>Euteleostomi</taxon>
        <taxon>Mammalia</taxon>
        <taxon>Eutheria</taxon>
        <taxon>Laurasiatheria</taxon>
        <taxon>Artiodactyla</taxon>
        <taxon>Ruminantia</taxon>
        <taxon>Pecora</taxon>
        <taxon>Bovidae</taxon>
        <taxon>Bovinae</taxon>
        <taxon>Bos</taxon>
    </lineage>
</organism>
<gene>
    <name type="primary">FUOM</name>
</gene>
<protein>
    <recommendedName>
        <fullName>Fucose mutarotase</fullName>
        <ecNumber evidence="1">5.1.3.29</ecNumber>
    </recommendedName>
</protein>
<evidence type="ECO:0000250" key="1">
    <source>
        <dbReference type="UniProtKB" id="Q8R2K1"/>
    </source>
</evidence>
<evidence type="ECO:0000305" key="2"/>
<reference key="1">
    <citation type="submission" date="2006-08" db="EMBL/GenBank/DDBJ databases">
        <authorList>
            <consortium name="NIH - Mammalian Gene Collection (MGC) project"/>
        </authorList>
    </citation>
    <scope>NUCLEOTIDE SEQUENCE [LARGE SCALE MRNA]</scope>
    <source>
        <strain>Hereford</strain>
        <tissue>Testis</tissue>
    </source>
</reference>
<name>FUCM_BOVIN</name>
<sequence length="153" mass="16469">MVVLKGVPALLSPELLFALARMGHGDEIVLADVNFPSSSICRGGPEEIRADGLGIPQLLEAVLQLLPLDTYVQSPAMVMELVPSDRKSGLLTPVWTSYQSILSRAGYEFSLGMGRFAFYERAKKAFAVVATGETALYGNLILKKGVLAPKDLC</sequence>
<keyword id="KW-0413">Isomerase</keyword>
<keyword id="KW-1185">Reference proteome</keyword>
<comment type="function">
    <text evidence="1">Involved in the interconversion between alpha- and beta-L-fucoses. L-Fucose (6-deoxy-L-galactose) exists as alpha-L-fucose (29.5%) and beta-L-fucose (70.5%), the beta-form is metabolized through the salvage pathway. GDP-L-fucose formed either by the de novo or salvage pathways is transported into the endoplasmic reticulum, where it serves as a substrate for N- and O-glycosylations by fucosyltransferases. Fucosylated structures expressed on cell surfaces or secreted in biological fluids are believed to play a critical role in cell-cell adhesion and recognition processes.</text>
</comment>
<comment type="catalytic activity">
    <reaction evidence="1">
        <text>alpha-L-fucose = beta-L-fucose</text>
        <dbReference type="Rhea" id="RHEA:25580"/>
        <dbReference type="ChEBI" id="CHEBI:42548"/>
        <dbReference type="ChEBI" id="CHEBI:42589"/>
        <dbReference type="EC" id="5.1.3.29"/>
    </reaction>
</comment>
<comment type="pathway">
    <text evidence="1">Carbohydrate metabolism; L-fucose metabolism.</text>
</comment>
<comment type="subunit">
    <text evidence="1">Mainly homodimer, but also exists as homotetramer, homooctamer, and homodecamer. The homodimeric form seems catalytically inactive.</text>
</comment>
<comment type="similarity">
    <text evidence="2">Belongs to the RbsD / FucU family.</text>
</comment>
<accession>Q0P563</accession>
<proteinExistence type="evidence at transcript level"/>
<feature type="chain" id="PRO_0000286552" description="Fucose mutarotase">
    <location>
        <begin position="1"/>
        <end position="153"/>
    </location>
</feature>
<feature type="active site" description="Proton donor" evidence="1">
    <location>
        <position position="24"/>
    </location>
</feature>
<feature type="active site" evidence="1">
    <location>
        <position position="69"/>
    </location>
</feature>
<feature type="active site" evidence="1">
    <location>
        <position position="119"/>
    </location>
</feature>
<feature type="binding site" evidence="1">
    <location>
        <position position="32"/>
    </location>
    <ligand>
        <name>substrate</name>
    </ligand>
</feature>
<feature type="binding site" evidence="1">
    <location>
        <position position="79"/>
    </location>
    <ligand>
        <name>substrate</name>
    </ligand>
</feature>
<feature type="binding site" evidence="1">
    <location>
        <position position="119"/>
    </location>
    <ligand>
        <name>substrate</name>
    </ligand>
</feature>
<feature type="binding site" evidence="1">
    <location>
        <position position="137"/>
    </location>
    <ligand>
        <name>substrate</name>
    </ligand>
</feature>
<feature type="binding site" evidence="1">
    <location>
        <position position="139"/>
    </location>
    <ligand>
        <name>substrate</name>
    </ligand>
</feature>